<evidence type="ECO:0000250" key="1"/>
<evidence type="ECO:0000255" key="2"/>
<evidence type="ECO:0000269" key="3">
    <source>
    </source>
</evidence>
<evidence type="ECO:0000305" key="4"/>
<feature type="signal peptide" evidence="2">
    <location>
        <begin position="1"/>
        <end position="17"/>
    </location>
</feature>
<feature type="chain" id="PRO_0000429944" description="Cell wall protein PGA48">
    <location>
        <begin position="18"/>
        <end position="84"/>
    </location>
</feature>
<feature type="propeptide" id="PRO_0000429945" description="Removed in mature form" evidence="2">
    <location>
        <begin position="85"/>
        <end position="108"/>
    </location>
</feature>
<feature type="lipid moiety-binding region" description="GPI-anchor amidated asparagine" evidence="2">
    <location>
        <position position="84"/>
    </location>
</feature>
<feature type="glycosylation site" description="N-linked (GlcNAc...) asparagine" evidence="2">
    <location>
        <position position="18"/>
    </location>
</feature>
<feature type="glycosylation site" description="N-linked (GlcNAc...) asparagine" evidence="2">
    <location>
        <position position="41"/>
    </location>
</feature>
<feature type="glycosylation site" description="N-linked (GlcNAc...) asparagine" evidence="2">
    <location>
        <position position="77"/>
    </location>
</feature>
<accession>Q59L96</accession>
<accession>A0A1D8PPC0</accession>
<comment type="function">
    <text evidence="1">Cell wall protein that plays a role in adaptation and resistance to cell wall stress.</text>
</comment>
<comment type="subcellular location">
    <subcellularLocation>
        <location evidence="1">Secreted</location>
        <location evidence="1">Cell wall</location>
    </subcellularLocation>
    <subcellularLocation>
        <location evidence="1">Membrane</location>
        <topology evidence="1">Lipid-anchor</topology>
        <topology evidence="1">GPI-anchor</topology>
    </subcellularLocation>
    <text evidence="1">Covalently-linked GPI-modified cell wall protein (GPI-CWP).</text>
</comment>
<comment type="induction">
    <text evidence="3">Expression is induced in high iron conditions.</text>
</comment>
<comment type="PTM">
    <text evidence="1">The GPI-anchor is attached to the protein in the endoplasmic reticulum and serves to target the protein to the cell surface. There, the glucosamine-inositol phospholipid moiety is cleaved off and the GPI-modified mannoprotein is covalently attached via its lipidless GPI glycan remnant to the 1,6-beta-glucan of the outer cell wall layer (By similarity).</text>
</comment>
<comment type="similarity">
    <text evidence="4">Belongs to the SED1 family.</text>
</comment>
<keyword id="KW-0134">Cell wall</keyword>
<keyword id="KW-0325">Glycoprotein</keyword>
<keyword id="KW-0336">GPI-anchor</keyword>
<keyword id="KW-0449">Lipoprotein</keyword>
<keyword id="KW-0472">Membrane</keyword>
<keyword id="KW-1185">Reference proteome</keyword>
<keyword id="KW-0964">Secreted</keyword>
<keyword id="KW-0732">Signal</keyword>
<protein>
    <recommendedName>
        <fullName>Cell wall protein PGA48</fullName>
    </recommendedName>
    <alternativeName>
        <fullName>Predicted GPI-anchored protein 48</fullName>
    </alternativeName>
</protein>
<organism>
    <name type="scientific">Candida albicans (strain SC5314 / ATCC MYA-2876)</name>
    <name type="common">Yeast</name>
    <dbReference type="NCBI Taxonomy" id="237561"/>
    <lineage>
        <taxon>Eukaryota</taxon>
        <taxon>Fungi</taxon>
        <taxon>Dikarya</taxon>
        <taxon>Ascomycota</taxon>
        <taxon>Saccharomycotina</taxon>
        <taxon>Pichiomycetes</taxon>
        <taxon>Debaryomycetaceae</taxon>
        <taxon>Candida/Lodderomyces clade</taxon>
        <taxon>Candida</taxon>
    </lineage>
</organism>
<name>PGA48_CANAL</name>
<dbReference type="EMBL" id="CP017628">
    <property type="protein sequence ID" value="AOW29966.1"/>
    <property type="molecule type" value="Genomic_DNA"/>
</dbReference>
<dbReference type="RefSeq" id="XP_710492.2">
    <property type="nucleotide sequence ID" value="XM_705400.2"/>
</dbReference>
<dbReference type="SMR" id="Q59L96"/>
<dbReference type="FunCoup" id="Q59L96">
    <property type="interactions" value="41"/>
</dbReference>
<dbReference type="STRING" id="237561.Q59L96"/>
<dbReference type="GlyCosmos" id="Q59L96">
    <property type="glycosylation" value="3 sites, No reported glycans"/>
</dbReference>
<dbReference type="EnsemblFungi" id="C6_00160W_A-T">
    <property type="protein sequence ID" value="C6_00160W_A-T-p1"/>
    <property type="gene ID" value="C6_00160W_A"/>
</dbReference>
<dbReference type="GeneID" id="3647905"/>
<dbReference type="KEGG" id="cal:CAALFM_C600160WA"/>
<dbReference type="CGD" id="CAL0000178188">
    <property type="gene designation" value="PGA48"/>
</dbReference>
<dbReference type="VEuPathDB" id="FungiDB:C6_00160W_A"/>
<dbReference type="HOGENOM" id="CLU_119130_0_0_1"/>
<dbReference type="InParanoid" id="Q59L96"/>
<dbReference type="OrthoDB" id="10482292at2759"/>
<dbReference type="Proteomes" id="UP000000559">
    <property type="component" value="Chromosome 6"/>
</dbReference>
<dbReference type="GO" id="GO:0005576">
    <property type="term" value="C:extracellular region"/>
    <property type="evidence" value="ECO:0007669"/>
    <property type="project" value="UniProtKB-KW"/>
</dbReference>
<dbReference type="GO" id="GO:0098552">
    <property type="term" value="C:side of membrane"/>
    <property type="evidence" value="ECO:0007669"/>
    <property type="project" value="UniProtKB-KW"/>
</dbReference>
<reference key="1">
    <citation type="journal article" date="2004" name="Proc. Natl. Acad. Sci. U.S.A.">
        <title>The diploid genome sequence of Candida albicans.</title>
        <authorList>
            <person name="Jones T."/>
            <person name="Federspiel N.A."/>
            <person name="Chibana H."/>
            <person name="Dungan J."/>
            <person name="Kalman S."/>
            <person name="Magee B.B."/>
            <person name="Newport G."/>
            <person name="Thorstenson Y.R."/>
            <person name="Agabian N."/>
            <person name="Magee P.T."/>
            <person name="Davis R.W."/>
            <person name="Scherer S."/>
        </authorList>
    </citation>
    <scope>NUCLEOTIDE SEQUENCE [LARGE SCALE GENOMIC DNA]</scope>
    <source>
        <strain>SC5314 / ATCC MYA-2876</strain>
    </source>
</reference>
<reference key="2">
    <citation type="journal article" date="2007" name="Genome Biol.">
        <title>Assembly of the Candida albicans genome into sixteen supercontigs aligned on the eight chromosomes.</title>
        <authorList>
            <person name="van het Hoog M."/>
            <person name="Rast T.J."/>
            <person name="Martchenko M."/>
            <person name="Grindle S."/>
            <person name="Dignard D."/>
            <person name="Hogues H."/>
            <person name="Cuomo C."/>
            <person name="Berriman M."/>
            <person name="Scherer S."/>
            <person name="Magee B.B."/>
            <person name="Whiteway M."/>
            <person name="Chibana H."/>
            <person name="Nantel A."/>
            <person name="Magee P.T."/>
        </authorList>
    </citation>
    <scope>GENOME REANNOTATION</scope>
    <source>
        <strain>SC5314 / ATCC MYA-2876</strain>
    </source>
</reference>
<reference key="3">
    <citation type="journal article" date="2013" name="Genome Biol.">
        <title>Assembly of a phased diploid Candida albicans genome facilitates allele-specific measurements and provides a simple model for repeat and indel structure.</title>
        <authorList>
            <person name="Muzzey D."/>
            <person name="Schwartz K."/>
            <person name="Weissman J.S."/>
            <person name="Sherlock G."/>
        </authorList>
    </citation>
    <scope>NUCLEOTIDE SEQUENCE [LARGE SCALE GENOMIC DNA]</scope>
    <scope>GENOME REANNOTATION</scope>
    <source>
        <strain>SC5314 / ATCC MYA-2876</strain>
    </source>
</reference>
<reference key="4">
    <citation type="journal article" date="2003" name="Yeast">
        <title>Genome-wide identification of fungal GPI proteins.</title>
        <authorList>
            <person name="De Groot P.W."/>
            <person name="Hellingwerf K.J."/>
            <person name="Klis F.M."/>
        </authorList>
    </citation>
    <scope>PREDICTION OF GPI-ANCHOR</scope>
</reference>
<reference key="5">
    <citation type="journal article" date="2004" name="Mol. Microbiol.">
        <title>Regulatory networks affected by iron availability in Candida albicans.</title>
        <authorList>
            <person name="Lan C.Y."/>
            <person name="Rodarte G."/>
            <person name="Murillo L.A."/>
            <person name="Jones T."/>
            <person name="Davis R.W."/>
            <person name="Dungan J."/>
            <person name="Newport G."/>
            <person name="Agabian N."/>
        </authorList>
    </citation>
    <scope>INDUCTION</scope>
</reference>
<sequence length="108" mass="11559">MFKFVIYLFTFIAFANANYTTWSLVTDYTTYCPQSTEITVNNSIITITGPTTLTITGECTLDYVATVEAAPSSIPSNVTVIESNGASKLNLRSLAGAGLVAAIFIAFI</sequence>
<gene>
    <name type="primary">PGA48</name>
    <name type="synonym">SPI1</name>
    <name type="ordered locus">CAALFM_C600160WA</name>
    <name type="ORF">CaO19.6321</name>
</gene>
<proteinExistence type="evidence at protein level"/>